<keyword id="KW-0175">Coiled coil</keyword>
<keyword id="KW-0963">Cytoplasm</keyword>
<keyword id="KW-0396">Initiation factor</keyword>
<keyword id="KW-0648">Protein biosynthesis</keyword>
<keyword id="KW-1185">Reference proteome</keyword>
<keyword id="KW-0694">RNA-binding</keyword>
<evidence type="ECO:0000255" key="1">
    <source>
        <dbReference type="HAMAP-Rule" id="MF_03000"/>
    </source>
</evidence>
<evidence type="ECO:0000255" key="2">
    <source>
        <dbReference type="PROSITE-ProRule" id="PRU01185"/>
    </source>
</evidence>
<evidence type="ECO:0000256" key="3">
    <source>
        <dbReference type="SAM" id="MobiDB-lite"/>
    </source>
</evidence>
<dbReference type="EMBL" id="DS027688">
    <property type="protein sequence ID" value="EAW23250.1"/>
    <property type="molecule type" value="Genomic_DNA"/>
</dbReference>
<dbReference type="RefSeq" id="XP_001265147.1">
    <property type="nucleotide sequence ID" value="XM_001265146.1"/>
</dbReference>
<dbReference type="SMR" id="A1D4A7"/>
<dbReference type="STRING" id="331117.A1D4A7"/>
<dbReference type="EnsemblFungi" id="EAW23250">
    <property type="protein sequence ID" value="EAW23250"/>
    <property type="gene ID" value="NFIA_019540"/>
</dbReference>
<dbReference type="GeneID" id="4590839"/>
<dbReference type="KEGG" id="nfi:NFIA_019540"/>
<dbReference type="VEuPathDB" id="FungiDB:NFIA_019540"/>
<dbReference type="eggNOG" id="KOG2072">
    <property type="taxonomic scope" value="Eukaryota"/>
</dbReference>
<dbReference type="HOGENOM" id="CLU_002096_2_1_1"/>
<dbReference type="OMA" id="EHITNKR"/>
<dbReference type="OrthoDB" id="18884at2759"/>
<dbReference type="Proteomes" id="UP000006702">
    <property type="component" value="Unassembled WGS sequence"/>
</dbReference>
<dbReference type="GO" id="GO:0010494">
    <property type="term" value="C:cytoplasmic stress granule"/>
    <property type="evidence" value="ECO:0007669"/>
    <property type="project" value="EnsemblFungi"/>
</dbReference>
<dbReference type="GO" id="GO:0016282">
    <property type="term" value="C:eukaryotic 43S preinitiation complex"/>
    <property type="evidence" value="ECO:0007669"/>
    <property type="project" value="UniProtKB-UniRule"/>
</dbReference>
<dbReference type="GO" id="GO:0033290">
    <property type="term" value="C:eukaryotic 48S preinitiation complex"/>
    <property type="evidence" value="ECO:0007669"/>
    <property type="project" value="UniProtKB-UniRule"/>
</dbReference>
<dbReference type="GO" id="GO:0071540">
    <property type="term" value="C:eukaryotic translation initiation factor 3 complex, eIF3e"/>
    <property type="evidence" value="ECO:0007669"/>
    <property type="project" value="EnsemblFungi"/>
</dbReference>
<dbReference type="GO" id="GO:0071541">
    <property type="term" value="C:eukaryotic translation initiation factor 3 complex, eIF3m"/>
    <property type="evidence" value="ECO:0007669"/>
    <property type="project" value="EnsemblFungi"/>
</dbReference>
<dbReference type="GO" id="GO:0043614">
    <property type="term" value="C:multi-eIF complex"/>
    <property type="evidence" value="ECO:0007669"/>
    <property type="project" value="TreeGrafter"/>
</dbReference>
<dbReference type="GO" id="GO:0003729">
    <property type="term" value="F:mRNA binding"/>
    <property type="evidence" value="ECO:0007669"/>
    <property type="project" value="TreeGrafter"/>
</dbReference>
<dbReference type="GO" id="GO:0003743">
    <property type="term" value="F:translation initiation factor activity"/>
    <property type="evidence" value="ECO:0007669"/>
    <property type="project" value="UniProtKB-UniRule"/>
</dbReference>
<dbReference type="GO" id="GO:0001732">
    <property type="term" value="P:formation of cytoplasmic translation initiation complex"/>
    <property type="evidence" value="ECO:0007669"/>
    <property type="project" value="UniProtKB-UniRule"/>
</dbReference>
<dbReference type="GO" id="GO:0002188">
    <property type="term" value="P:translation reinitiation"/>
    <property type="evidence" value="ECO:0007669"/>
    <property type="project" value="TreeGrafter"/>
</dbReference>
<dbReference type="FunFam" id="1.25.40.860:FF:000003">
    <property type="entry name" value="Eukaryotic translation initiation factor 3 subunit A"/>
    <property type="match status" value="1"/>
</dbReference>
<dbReference type="FunFam" id="1.25.40.860:FF:000005">
    <property type="entry name" value="Eukaryotic translation initiation factor 3 subunit A"/>
    <property type="match status" value="1"/>
</dbReference>
<dbReference type="FunFam" id="4.10.860.10:FF:000001">
    <property type="entry name" value="Eukaryotic translation initiation factor 3 subunit A"/>
    <property type="match status" value="1"/>
</dbReference>
<dbReference type="Gene3D" id="1.25.40.860">
    <property type="match status" value="2"/>
</dbReference>
<dbReference type="Gene3D" id="4.10.860.10">
    <property type="entry name" value="UVR domain"/>
    <property type="match status" value="1"/>
</dbReference>
<dbReference type="HAMAP" id="MF_03000">
    <property type="entry name" value="eIF3a"/>
    <property type="match status" value="1"/>
</dbReference>
<dbReference type="InterPro" id="IPR027512">
    <property type="entry name" value="EIF3A"/>
</dbReference>
<dbReference type="InterPro" id="IPR054711">
    <property type="entry name" value="eIF3a_PCI_TPR-like"/>
</dbReference>
<dbReference type="InterPro" id="IPR000717">
    <property type="entry name" value="PCI_dom"/>
</dbReference>
<dbReference type="PANTHER" id="PTHR14005:SF0">
    <property type="entry name" value="EUKARYOTIC TRANSLATION INITIATION FACTOR 3 SUBUNIT A"/>
    <property type="match status" value="1"/>
</dbReference>
<dbReference type="PANTHER" id="PTHR14005">
    <property type="entry name" value="EUKARYOTIC TRANSLATION INITIATION FACTOR 3, THETA SUBUNIT"/>
    <property type="match status" value="1"/>
</dbReference>
<dbReference type="Pfam" id="PF22591">
    <property type="entry name" value="eIF3a_PCI_TPR-like"/>
    <property type="match status" value="1"/>
</dbReference>
<dbReference type="Pfam" id="PF01399">
    <property type="entry name" value="PCI"/>
    <property type="match status" value="1"/>
</dbReference>
<dbReference type="SMART" id="SM00088">
    <property type="entry name" value="PINT"/>
    <property type="match status" value="1"/>
</dbReference>
<dbReference type="PROSITE" id="PS50250">
    <property type="entry name" value="PCI"/>
    <property type="match status" value="1"/>
</dbReference>
<name>EIF3A_NEOFI</name>
<feature type="chain" id="PRO_0000366366" description="Eukaryotic translation initiation factor 3 subunit A">
    <location>
        <begin position="1"/>
        <end position="1067"/>
    </location>
</feature>
<feature type="domain" description="PCI" evidence="2">
    <location>
        <begin position="339"/>
        <end position="523"/>
    </location>
</feature>
<feature type="region of interest" description="Disordered" evidence="3">
    <location>
        <begin position="617"/>
        <end position="665"/>
    </location>
</feature>
<feature type="region of interest" description="Disordered" evidence="3">
    <location>
        <begin position="795"/>
        <end position="1067"/>
    </location>
</feature>
<feature type="coiled-coil region" evidence="1">
    <location>
        <begin position="92"/>
        <end position="121"/>
    </location>
</feature>
<feature type="coiled-coil region" evidence="1">
    <location>
        <begin position="608"/>
        <end position="899"/>
    </location>
</feature>
<feature type="compositionally biased region" description="Basic and acidic residues" evidence="3">
    <location>
        <begin position="617"/>
        <end position="632"/>
    </location>
</feature>
<feature type="compositionally biased region" description="Basic and acidic residues" evidence="3">
    <location>
        <begin position="642"/>
        <end position="665"/>
    </location>
</feature>
<feature type="compositionally biased region" description="Basic and acidic residues" evidence="3">
    <location>
        <begin position="795"/>
        <end position="901"/>
    </location>
</feature>
<feature type="compositionally biased region" description="Basic and acidic residues" evidence="3">
    <location>
        <begin position="916"/>
        <end position="926"/>
    </location>
</feature>
<feature type="compositionally biased region" description="Low complexity" evidence="3">
    <location>
        <begin position="965"/>
        <end position="976"/>
    </location>
</feature>
<feature type="compositionally biased region" description="Low complexity" evidence="3">
    <location>
        <begin position="1025"/>
        <end position="1046"/>
    </location>
</feature>
<gene>
    <name type="primary">tif32</name>
    <name type="ORF">NFIA_019540</name>
</gene>
<comment type="function">
    <text evidence="1">RNA-binding component of the eukaryotic translation initiation factor 3 (eIF-3) complex, which is involved in protein synthesis of a specialized repertoire of mRNAs and, together with other initiation factors, stimulates binding of mRNA and methionyl-tRNAi to the 40S ribosome. The eIF-3 complex specifically targets and initiates translation of a subset of mRNAs involved in cell proliferation.</text>
</comment>
<comment type="subunit">
    <text evidence="1">Component of the eukaryotic translation initiation factor 3 (eIF-3) complex.</text>
</comment>
<comment type="subcellular location">
    <subcellularLocation>
        <location evidence="1">Cytoplasm</location>
    </subcellularLocation>
</comment>
<comment type="similarity">
    <text evidence="1">Belongs to the eIF-3 subunit A family.</text>
</comment>
<protein>
    <recommendedName>
        <fullName evidence="1">Eukaryotic translation initiation factor 3 subunit A</fullName>
        <shortName evidence="1">eIF3a</shortName>
    </recommendedName>
    <alternativeName>
        <fullName evidence="1">Eukaryotic translation initiation factor 3 110 kDa subunit homolog</fullName>
        <shortName evidence="1">eIF3 p110</shortName>
    </alternativeName>
    <alternativeName>
        <fullName evidence="1">Translation initiation factor eIF3, p110 subunit homolog</fullName>
    </alternativeName>
</protein>
<proteinExistence type="inferred from homology"/>
<organism>
    <name type="scientific">Neosartorya fischeri (strain ATCC 1020 / DSM 3700 / CBS 544.65 / FGSC A1164 / JCM 1740 / NRRL 181 / WB 181)</name>
    <name type="common">Aspergillus fischerianus</name>
    <dbReference type="NCBI Taxonomy" id="331117"/>
    <lineage>
        <taxon>Eukaryota</taxon>
        <taxon>Fungi</taxon>
        <taxon>Dikarya</taxon>
        <taxon>Ascomycota</taxon>
        <taxon>Pezizomycotina</taxon>
        <taxon>Eurotiomycetes</taxon>
        <taxon>Eurotiomycetidae</taxon>
        <taxon>Eurotiales</taxon>
        <taxon>Aspergillaceae</taxon>
        <taxon>Aspergillus</taxon>
        <taxon>Aspergillus subgen. Fumigati</taxon>
    </lineage>
</organism>
<sequence length="1067" mass="121373">MPPPPHIKPENVLKRAQELIAVGQAPAALNVLHEHVTSKRTRSSPIASLEPVMLLFVELCVDLRKGKAAKDGLYQYKNIAQNTNVGTIEVVLKKFIELAEKKVTEAQAKADEIQSSLESAAPSSNVEDLEAIETPETILLATVSGEQSRDRTDRAVVTPWLKFLWETYRTVLEILKNNARLEVMYQTTALQAFQFCLKYTRKTEFRRLCELLRNHVQNAAKYSAQMHAINLSDPDTLQRHLDTRFQQLNVAVELELWQEAFRSIEDIHTLLSLSKRPAKNVMMANYYEKLARIFLVSENYLFHAAAWNRYYNLLRQSAVALAAGQGTKKENPSVTEADMTKAASFVLLSALSIPVISTSRSRGALVDVDEARKNKNTRLTNLLGMAQPPSRAVLFRDALNKGLLKRARPEIRDLYNILEVDFHPLSICKKITPILKQIGADPEMEKYVLPLQQVILTRLFQQLSQVYESVELKFVYELAQFPDPFQITPAMIEKFIMNGCKKGDLAIRVDHTSGVLTFDTDIFSSAKALHSGSAAGSAESDVGSVQRLQNTPAEIARLQLTRLAKTLHVTCMYVDPSYNEARIQAKKAAQARAEAGAAKEHEETLARRVLIEKKKEAATDALQRKQREEETRKRIRTQQLQEAEKQRLLDEQREREKKRLKDEQDRIRQQELKKQLEELKSGVKGIDISEIDLEDMDANRLRAIKLAQLEKEKNELNERIRTTAKRIDHLERAFRREELKHIPEDYEAQKKRDMELYEAIKAETLKEAEEKHKEAVALKHRLSRLVPVFSSFRKEVSEKRHEEFEKRRKAAEREFEAKKKQRVKEVQERRRREKAEREAEERRRKEEEERAKREEEERIAKEEERRRVLAEEKAKREEERKRLDEIALRQKQREEEAEARRAARKSGLAEPPTRAAEPERPAERTAPRLNLASRTGGAPSWRERQAAKEATGAAPAPAPVPAPAAAPAAAPAPAAEAPKEEVQLPRRTGGYVPPHLRSGASASPAAPPSNGPAPEKYVPRHMRESSSSQPPSRTQTPPAPAAAASSDKPEGSPAPQKWVPRWKQQQQ</sequence>
<accession>A1D4A7</accession>
<reference key="1">
    <citation type="journal article" date="2008" name="PLoS Genet.">
        <title>Genomic islands in the pathogenic filamentous fungus Aspergillus fumigatus.</title>
        <authorList>
            <person name="Fedorova N.D."/>
            <person name="Khaldi N."/>
            <person name="Joardar V.S."/>
            <person name="Maiti R."/>
            <person name="Amedeo P."/>
            <person name="Anderson M.J."/>
            <person name="Crabtree J."/>
            <person name="Silva J.C."/>
            <person name="Badger J.H."/>
            <person name="Albarraq A."/>
            <person name="Angiuoli S."/>
            <person name="Bussey H."/>
            <person name="Bowyer P."/>
            <person name="Cotty P.J."/>
            <person name="Dyer P.S."/>
            <person name="Egan A."/>
            <person name="Galens K."/>
            <person name="Fraser-Liggett C.M."/>
            <person name="Haas B.J."/>
            <person name="Inman J.M."/>
            <person name="Kent R."/>
            <person name="Lemieux S."/>
            <person name="Malavazi I."/>
            <person name="Orvis J."/>
            <person name="Roemer T."/>
            <person name="Ronning C.M."/>
            <person name="Sundaram J.P."/>
            <person name="Sutton G."/>
            <person name="Turner G."/>
            <person name="Venter J.C."/>
            <person name="White O.R."/>
            <person name="Whitty B.R."/>
            <person name="Youngman P."/>
            <person name="Wolfe K.H."/>
            <person name="Goldman G.H."/>
            <person name="Wortman J.R."/>
            <person name="Jiang B."/>
            <person name="Denning D.W."/>
            <person name="Nierman W.C."/>
        </authorList>
    </citation>
    <scope>NUCLEOTIDE SEQUENCE [LARGE SCALE GENOMIC DNA]</scope>
    <source>
        <strain>ATCC 1020 / DSM 3700 / CBS 544.65 / FGSC A1164 / JCM 1740 / NRRL 181 / WB 181</strain>
    </source>
</reference>